<accession>A4THI5</accession>
<evidence type="ECO:0000255" key="1">
    <source>
        <dbReference type="HAMAP-Rule" id="MF_00111"/>
    </source>
</evidence>
<reference key="1">
    <citation type="submission" date="2007-02" db="EMBL/GenBank/DDBJ databases">
        <title>Complete sequence of chromosome of Yersinia pestis Pestoides F.</title>
        <authorList>
            <consortium name="US DOE Joint Genome Institute"/>
            <person name="Copeland A."/>
            <person name="Lucas S."/>
            <person name="Lapidus A."/>
            <person name="Barry K."/>
            <person name="Detter J.C."/>
            <person name="Glavina del Rio T."/>
            <person name="Hammon N."/>
            <person name="Israni S."/>
            <person name="Dalin E."/>
            <person name="Tice H."/>
            <person name="Pitluck S."/>
            <person name="Di Bartolo G."/>
            <person name="Chain P."/>
            <person name="Malfatti S."/>
            <person name="Shin M."/>
            <person name="Vergez L."/>
            <person name="Schmutz J."/>
            <person name="Larimer F."/>
            <person name="Land M."/>
            <person name="Hauser L."/>
            <person name="Worsham P."/>
            <person name="Chu M."/>
            <person name="Bearden S."/>
            <person name="Garcia E."/>
            <person name="Richardson P."/>
        </authorList>
    </citation>
    <scope>NUCLEOTIDE SEQUENCE [LARGE SCALE GENOMIC DNA]</scope>
    <source>
        <strain>Pestoides F</strain>
    </source>
</reference>
<sequence length="420" mass="44845">MDKFRVQGRTRLSGEVTISGAKNAALPILFAALLAEEPVELQNVPKLKDIDTTIKLLSQLGTKIERNNGSVFVDASAVNEFCAPYDLVKTMRASIWALGPLVARFGQGQVSLPGGCAIGARPVDLHITGLEQLGAEIKLEEGYVKASVNGRLKGAHIVMDKVSVGATVTIMSAATLAEGTTVIENAAREPEIVDTANFLNTLGAKISGAGTDRITIEGVTRLGGGVYRVLPDRIETGTFLVAAAISGGKVVCRQTRPDTLDAVLAKLREAGADIEVGDDWISLDMQGKRPKAITFRTAPHPGFPTDMQAQFSLLNLVAEGTGVITETIFENRFMHVPELIRMGAHAEIESNTVICYGVEQLSGAQVMATDLRASASLVLAGCIAEGVTIVDRIYHIDRGYERIEDKLRALGAKIERVKGE</sequence>
<proteinExistence type="inferred from homology"/>
<dbReference type="EC" id="2.5.1.7" evidence="1"/>
<dbReference type="EMBL" id="CP000668">
    <property type="protein sequence ID" value="ABP38747.1"/>
    <property type="molecule type" value="Genomic_DNA"/>
</dbReference>
<dbReference type="RefSeq" id="WP_002210127.1">
    <property type="nucleotide sequence ID" value="NZ_CP009715.1"/>
</dbReference>
<dbReference type="SMR" id="A4THI5"/>
<dbReference type="GeneID" id="57975146"/>
<dbReference type="KEGG" id="ypp:YPDSF_0328"/>
<dbReference type="PATRIC" id="fig|386656.14.peg.1629"/>
<dbReference type="UniPathway" id="UPA00219"/>
<dbReference type="GO" id="GO:0005737">
    <property type="term" value="C:cytoplasm"/>
    <property type="evidence" value="ECO:0007669"/>
    <property type="project" value="UniProtKB-SubCell"/>
</dbReference>
<dbReference type="GO" id="GO:0008760">
    <property type="term" value="F:UDP-N-acetylglucosamine 1-carboxyvinyltransferase activity"/>
    <property type="evidence" value="ECO:0007669"/>
    <property type="project" value="UniProtKB-UniRule"/>
</dbReference>
<dbReference type="GO" id="GO:0051301">
    <property type="term" value="P:cell division"/>
    <property type="evidence" value="ECO:0007669"/>
    <property type="project" value="UniProtKB-KW"/>
</dbReference>
<dbReference type="GO" id="GO:0071555">
    <property type="term" value="P:cell wall organization"/>
    <property type="evidence" value="ECO:0007669"/>
    <property type="project" value="UniProtKB-KW"/>
</dbReference>
<dbReference type="GO" id="GO:0009252">
    <property type="term" value="P:peptidoglycan biosynthetic process"/>
    <property type="evidence" value="ECO:0007669"/>
    <property type="project" value="UniProtKB-UniRule"/>
</dbReference>
<dbReference type="GO" id="GO:0008360">
    <property type="term" value="P:regulation of cell shape"/>
    <property type="evidence" value="ECO:0007669"/>
    <property type="project" value="UniProtKB-KW"/>
</dbReference>
<dbReference type="GO" id="GO:0019277">
    <property type="term" value="P:UDP-N-acetylgalactosamine biosynthetic process"/>
    <property type="evidence" value="ECO:0007669"/>
    <property type="project" value="InterPro"/>
</dbReference>
<dbReference type="CDD" id="cd01555">
    <property type="entry name" value="UdpNAET"/>
    <property type="match status" value="1"/>
</dbReference>
<dbReference type="FunFam" id="3.65.10.10:FF:000002">
    <property type="entry name" value="UDP-N-acetylglucosamine 1-carboxyvinyltransferase"/>
    <property type="match status" value="1"/>
</dbReference>
<dbReference type="Gene3D" id="3.65.10.10">
    <property type="entry name" value="Enolpyruvate transferase domain"/>
    <property type="match status" value="2"/>
</dbReference>
<dbReference type="HAMAP" id="MF_00111">
    <property type="entry name" value="MurA"/>
    <property type="match status" value="1"/>
</dbReference>
<dbReference type="InterPro" id="IPR001986">
    <property type="entry name" value="Enolpyruvate_Tfrase_dom"/>
</dbReference>
<dbReference type="InterPro" id="IPR036968">
    <property type="entry name" value="Enolpyruvate_Tfrase_sf"/>
</dbReference>
<dbReference type="InterPro" id="IPR050068">
    <property type="entry name" value="MurA_subfamily"/>
</dbReference>
<dbReference type="InterPro" id="IPR013792">
    <property type="entry name" value="RNA3'P_cycl/enolpyr_Trfase_a/b"/>
</dbReference>
<dbReference type="InterPro" id="IPR005750">
    <property type="entry name" value="UDP_GlcNAc_COvinyl_MurA"/>
</dbReference>
<dbReference type="NCBIfam" id="TIGR01072">
    <property type="entry name" value="murA"/>
    <property type="match status" value="1"/>
</dbReference>
<dbReference type="NCBIfam" id="NF006873">
    <property type="entry name" value="PRK09369.1"/>
    <property type="match status" value="1"/>
</dbReference>
<dbReference type="PANTHER" id="PTHR43783">
    <property type="entry name" value="UDP-N-ACETYLGLUCOSAMINE 1-CARBOXYVINYLTRANSFERASE"/>
    <property type="match status" value="1"/>
</dbReference>
<dbReference type="PANTHER" id="PTHR43783:SF1">
    <property type="entry name" value="UDP-N-ACETYLGLUCOSAMINE 1-CARBOXYVINYLTRANSFERASE"/>
    <property type="match status" value="1"/>
</dbReference>
<dbReference type="Pfam" id="PF00275">
    <property type="entry name" value="EPSP_synthase"/>
    <property type="match status" value="1"/>
</dbReference>
<dbReference type="SUPFAM" id="SSF55205">
    <property type="entry name" value="EPT/RTPC-like"/>
    <property type="match status" value="1"/>
</dbReference>
<feature type="chain" id="PRO_1000023126" description="UDP-N-acetylglucosamine 1-carboxyvinyltransferase">
    <location>
        <begin position="1"/>
        <end position="420"/>
    </location>
</feature>
<feature type="active site" description="Proton donor" evidence="1">
    <location>
        <position position="116"/>
    </location>
</feature>
<feature type="binding site" evidence="1">
    <location>
        <begin position="22"/>
        <end position="23"/>
    </location>
    <ligand>
        <name>phosphoenolpyruvate</name>
        <dbReference type="ChEBI" id="CHEBI:58702"/>
    </ligand>
</feature>
<feature type="binding site" evidence="1">
    <location>
        <position position="92"/>
    </location>
    <ligand>
        <name>UDP-N-acetyl-alpha-D-glucosamine</name>
        <dbReference type="ChEBI" id="CHEBI:57705"/>
    </ligand>
</feature>
<feature type="binding site" evidence="1">
    <location>
        <begin position="121"/>
        <end position="125"/>
    </location>
    <ligand>
        <name>UDP-N-acetyl-alpha-D-glucosamine</name>
        <dbReference type="ChEBI" id="CHEBI:57705"/>
    </ligand>
</feature>
<feature type="binding site" evidence="1">
    <location>
        <begin position="161"/>
        <end position="164"/>
    </location>
    <ligand>
        <name>UDP-N-acetyl-alpha-D-glucosamine</name>
        <dbReference type="ChEBI" id="CHEBI:57705"/>
    </ligand>
</feature>
<feature type="binding site" evidence="1">
    <location>
        <position position="306"/>
    </location>
    <ligand>
        <name>UDP-N-acetyl-alpha-D-glucosamine</name>
        <dbReference type="ChEBI" id="CHEBI:57705"/>
    </ligand>
</feature>
<feature type="binding site" evidence="1">
    <location>
        <position position="328"/>
    </location>
    <ligand>
        <name>UDP-N-acetyl-alpha-D-glucosamine</name>
        <dbReference type="ChEBI" id="CHEBI:57705"/>
    </ligand>
</feature>
<feature type="modified residue" description="2-(S-cysteinyl)pyruvic acid O-phosphothioketal" evidence="1">
    <location>
        <position position="116"/>
    </location>
</feature>
<organism>
    <name type="scientific">Yersinia pestis (strain Pestoides F)</name>
    <dbReference type="NCBI Taxonomy" id="386656"/>
    <lineage>
        <taxon>Bacteria</taxon>
        <taxon>Pseudomonadati</taxon>
        <taxon>Pseudomonadota</taxon>
        <taxon>Gammaproteobacteria</taxon>
        <taxon>Enterobacterales</taxon>
        <taxon>Yersiniaceae</taxon>
        <taxon>Yersinia</taxon>
    </lineage>
</organism>
<name>MURA_YERPP</name>
<gene>
    <name evidence="1" type="primary">murA</name>
    <name type="ordered locus">YPDSF_0328</name>
</gene>
<comment type="function">
    <text evidence="1">Cell wall formation. Adds enolpyruvyl to UDP-N-acetylglucosamine.</text>
</comment>
<comment type="catalytic activity">
    <reaction evidence="1">
        <text>phosphoenolpyruvate + UDP-N-acetyl-alpha-D-glucosamine = UDP-N-acetyl-3-O-(1-carboxyvinyl)-alpha-D-glucosamine + phosphate</text>
        <dbReference type="Rhea" id="RHEA:18681"/>
        <dbReference type="ChEBI" id="CHEBI:43474"/>
        <dbReference type="ChEBI" id="CHEBI:57705"/>
        <dbReference type="ChEBI" id="CHEBI:58702"/>
        <dbReference type="ChEBI" id="CHEBI:68483"/>
        <dbReference type="EC" id="2.5.1.7"/>
    </reaction>
</comment>
<comment type="pathway">
    <text evidence="1">Cell wall biogenesis; peptidoglycan biosynthesis.</text>
</comment>
<comment type="subcellular location">
    <subcellularLocation>
        <location evidence="1">Cytoplasm</location>
    </subcellularLocation>
</comment>
<comment type="similarity">
    <text evidence="1">Belongs to the EPSP synthase family. MurA subfamily.</text>
</comment>
<keyword id="KW-0131">Cell cycle</keyword>
<keyword id="KW-0132">Cell division</keyword>
<keyword id="KW-0133">Cell shape</keyword>
<keyword id="KW-0961">Cell wall biogenesis/degradation</keyword>
<keyword id="KW-0963">Cytoplasm</keyword>
<keyword id="KW-0573">Peptidoglycan synthesis</keyword>
<keyword id="KW-0670">Pyruvate</keyword>
<keyword id="KW-0808">Transferase</keyword>
<protein>
    <recommendedName>
        <fullName evidence="1">UDP-N-acetylglucosamine 1-carboxyvinyltransferase</fullName>
        <ecNumber evidence="1">2.5.1.7</ecNumber>
    </recommendedName>
    <alternativeName>
        <fullName evidence="1">Enoylpyruvate transferase</fullName>
    </alternativeName>
    <alternativeName>
        <fullName evidence="1">UDP-N-acetylglucosamine enolpyruvyl transferase</fullName>
        <shortName evidence="1">EPT</shortName>
    </alternativeName>
</protein>